<dbReference type="EMBL" id="GAQE01000028">
    <property type="protein sequence ID" value="JAB84526.1"/>
    <property type="molecule type" value="Transcribed_RNA"/>
</dbReference>
<dbReference type="SMR" id="W4VS20"/>
<dbReference type="ArachnoServer" id="AS001504">
    <property type="toxin name" value="U16-barytoxin-Tl1a"/>
</dbReference>
<dbReference type="GO" id="GO:0005576">
    <property type="term" value="C:extracellular region"/>
    <property type="evidence" value="ECO:0007669"/>
    <property type="project" value="UniProtKB-SubCell"/>
</dbReference>
<dbReference type="GO" id="GO:0019871">
    <property type="term" value="F:sodium channel inhibitor activity"/>
    <property type="evidence" value="ECO:0007669"/>
    <property type="project" value="InterPro"/>
</dbReference>
<dbReference type="GO" id="GO:0090729">
    <property type="term" value="F:toxin activity"/>
    <property type="evidence" value="ECO:0007669"/>
    <property type="project" value="UniProtKB-KW"/>
</dbReference>
<dbReference type="InterPro" id="IPR012627">
    <property type="entry name" value="Toxin_22"/>
</dbReference>
<dbReference type="Pfam" id="PF08092">
    <property type="entry name" value="Toxin_22"/>
    <property type="match status" value="1"/>
</dbReference>
<reference key="1">
    <citation type="journal article" date="2013" name="Toxins">
        <title>A proteomics and transcriptomics investigation of the venom from the barychelid spider Trittame loki (brush-foot trapdoor).</title>
        <authorList>
            <person name="Undheim E.A."/>
            <person name="Sunagar K."/>
            <person name="Herzig V."/>
            <person name="Kely L."/>
            <person name="Low D.H."/>
            <person name="Jackson T.N."/>
            <person name="Jones A."/>
            <person name="Kurniawan N."/>
            <person name="King G.F."/>
            <person name="Ali S.A."/>
            <person name="Antunes A."/>
            <person name="Ruder T."/>
            <person name="Fry B.G."/>
        </authorList>
    </citation>
    <scope>NUCLEOTIDE SEQUENCE [MRNA]</scope>
    <source>
        <tissue>Venom gland</tissue>
    </source>
</reference>
<sequence length="116" mass="12917">MKTIIVFLSLLVLATKFGDAKEGVNQEQKKEVTQNEFRVEYLNEMAAMSLLQQLEAIESALFEKEAGRNSRQKRCNGKNVPCGANHSPCCSGLSCEETFGYGWLYKSPYCVIPSNG</sequence>
<protein>
    <recommendedName>
        <fullName>U16-barytoxin-Tl1a</fullName>
        <shortName>U16-BATX-Tl1a</shortName>
    </recommendedName>
    <alternativeName>
        <fullName evidence="3">Toxin ICK-25</fullName>
    </alternativeName>
</protein>
<feature type="signal peptide" evidence="2">
    <location>
        <begin position="1"/>
        <end position="20"/>
    </location>
</feature>
<feature type="propeptide" id="PRO_0000435148" evidence="4">
    <location>
        <begin position="21"/>
        <end position="74"/>
    </location>
</feature>
<feature type="chain" id="PRO_0000429232" description="U16-barytoxin-Tl1a">
    <location>
        <begin position="75"/>
        <end position="116"/>
    </location>
</feature>
<feature type="disulfide bond" evidence="1">
    <location>
        <begin position="75"/>
        <end position="90"/>
    </location>
</feature>
<feature type="disulfide bond" evidence="1">
    <location>
        <begin position="82"/>
        <end position="95"/>
    </location>
</feature>
<feature type="disulfide bond" evidence="1">
    <location>
        <begin position="89"/>
        <end position="110"/>
    </location>
</feature>
<keyword id="KW-0165">Cleavage on pair of basic residues</keyword>
<keyword id="KW-1015">Disulfide bond</keyword>
<keyword id="KW-0872">Ion channel impairing toxin</keyword>
<keyword id="KW-0960">Knottin</keyword>
<keyword id="KW-0964">Secreted</keyword>
<keyword id="KW-0732">Signal</keyword>
<keyword id="KW-0800">Toxin</keyword>
<evidence type="ECO:0000250" key="1"/>
<evidence type="ECO:0000255" key="2"/>
<evidence type="ECO:0000303" key="3">
    <source>
    </source>
</evidence>
<evidence type="ECO:0000305" key="4"/>
<comment type="function">
    <text evidence="4">Ion channel inhibitor.</text>
</comment>
<comment type="subcellular location">
    <subcellularLocation>
        <location evidence="1">Secreted</location>
    </subcellularLocation>
</comment>
<comment type="tissue specificity">
    <text>Expressed by the venom gland.</text>
</comment>
<comment type="domain">
    <text evidence="1">The presence of a 'disulfide through disulfide knot' structurally defines this protein as a knottin.</text>
</comment>
<comment type="similarity">
    <text evidence="4">Belongs to the neurotoxin 14 (magi-1) family. 06 (ICK-Trit) subfamily.</text>
</comment>
<accession>W4VS20</accession>
<name>ICK25_TRILK</name>
<organism>
    <name type="scientific">Trittame loki</name>
    <name type="common">Brush-footed trapdoor spider</name>
    <dbReference type="NCBI Taxonomy" id="1295018"/>
    <lineage>
        <taxon>Eukaryota</taxon>
        <taxon>Metazoa</taxon>
        <taxon>Ecdysozoa</taxon>
        <taxon>Arthropoda</taxon>
        <taxon>Chelicerata</taxon>
        <taxon>Arachnida</taxon>
        <taxon>Araneae</taxon>
        <taxon>Mygalomorphae</taxon>
        <taxon>Barychelidae</taxon>
        <taxon>Trittame</taxon>
    </lineage>
</organism>
<proteinExistence type="evidence at transcript level"/>